<name>NUSB_DEHM1</name>
<gene>
    <name evidence="1" type="primary">nusB</name>
    <name type="ordered locus">DET1278</name>
</gene>
<keyword id="KW-0694">RNA-binding</keyword>
<keyword id="KW-0804">Transcription</keyword>
<keyword id="KW-0889">Transcription antitermination</keyword>
<keyword id="KW-0805">Transcription regulation</keyword>
<comment type="function">
    <text evidence="1">Involved in transcription antitermination. Required for transcription of ribosomal RNA (rRNA) genes. Binds specifically to the boxA antiterminator sequence of the ribosomal RNA (rrn) operons.</text>
</comment>
<comment type="similarity">
    <text evidence="1">Belongs to the NusB family.</text>
</comment>
<protein>
    <recommendedName>
        <fullName evidence="1">Transcription antitermination protein NusB</fullName>
    </recommendedName>
    <alternativeName>
        <fullName evidence="1">Antitermination factor NusB</fullName>
    </alternativeName>
</protein>
<reference key="1">
    <citation type="journal article" date="2005" name="Science">
        <title>Genome sequence of the PCE-dechlorinating bacterium Dehalococcoides ethenogenes.</title>
        <authorList>
            <person name="Seshadri R."/>
            <person name="Adrian L."/>
            <person name="Fouts D.E."/>
            <person name="Eisen J.A."/>
            <person name="Phillippy A.M."/>
            <person name="Methe B.A."/>
            <person name="Ward N.L."/>
            <person name="Nelson W.C."/>
            <person name="DeBoy R.T."/>
            <person name="Khouri H.M."/>
            <person name="Kolonay J.F."/>
            <person name="Dodson R.J."/>
            <person name="Daugherty S.C."/>
            <person name="Brinkac L.M."/>
            <person name="Sullivan S.A."/>
            <person name="Madupu R."/>
            <person name="Nelson K.E."/>
            <person name="Kang K.H."/>
            <person name="Impraim M."/>
            <person name="Tran K."/>
            <person name="Robinson J.M."/>
            <person name="Forberger H.A."/>
            <person name="Fraser C.M."/>
            <person name="Zinder S.H."/>
            <person name="Heidelberg J.F."/>
        </authorList>
    </citation>
    <scope>NUCLEOTIDE SEQUENCE [LARGE SCALE GENOMIC DNA]</scope>
    <source>
        <strain>ATCC BAA-2266 / KCTC 15142 / 195</strain>
    </source>
</reference>
<sequence length="143" mass="16163">MTTSRRKAREIVLQALYEQDLAGHNAEDVLKRLLTETPQTEENAEFIFRLTNAIVKHKDLLDENIRQFASAWPVEQLSYIDRNVLRLAIFEIIHENDVPIKVAINEAVELAKSFGGNSSARFINGVLSSVSKALADTAKQREE</sequence>
<organism>
    <name type="scientific">Dehalococcoides mccartyi (strain ATCC BAA-2266 / KCTC 15142 / 195)</name>
    <name type="common">Dehalococcoides ethenogenes (strain 195)</name>
    <dbReference type="NCBI Taxonomy" id="243164"/>
    <lineage>
        <taxon>Bacteria</taxon>
        <taxon>Bacillati</taxon>
        <taxon>Chloroflexota</taxon>
        <taxon>Dehalococcoidia</taxon>
        <taxon>Dehalococcoidales</taxon>
        <taxon>Dehalococcoidaceae</taxon>
        <taxon>Dehalococcoides</taxon>
    </lineage>
</organism>
<evidence type="ECO:0000255" key="1">
    <source>
        <dbReference type="HAMAP-Rule" id="MF_00073"/>
    </source>
</evidence>
<proteinExistence type="inferred from homology"/>
<accession>Q3Z709</accession>
<feature type="chain" id="PRO_0000265512" description="Transcription antitermination protein NusB">
    <location>
        <begin position="1"/>
        <end position="143"/>
    </location>
</feature>
<dbReference type="EMBL" id="CP000027">
    <property type="protein sequence ID" value="AAW39437.1"/>
    <property type="molecule type" value="Genomic_DNA"/>
</dbReference>
<dbReference type="RefSeq" id="WP_010936967.1">
    <property type="nucleotide sequence ID" value="NC_002936.3"/>
</dbReference>
<dbReference type="SMR" id="Q3Z709"/>
<dbReference type="FunCoup" id="Q3Z709">
    <property type="interactions" value="209"/>
</dbReference>
<dbReference type="STRING" id="243164.DET1278"/>
<dbReference type="GeneID" id="3229397"/>
<dbReference type="KEGG" id="det:DET1278"/>
<dbReference type="PATRIC" id="fig|243164.10.peg.1208"/>
<dbReference type="eggNOG" id="COG0781">
    <property type="taxonomic scope" value="Bacteria"/>
</dbReference>
<dbReference type="HOGENOM" id="CLU_087843_3_3_0"/>
<dbReference type="InParanoid" id="Q3Z709"/>
<dbReference type="Proteomes" id="UP000008289">
    <property type="component" value="Chromosome"/>
</dbReference>
<dbReference type="GO" id="GO:0005829">
    <property type="term" value="C:cytosol"/>
    <property type="evidence" value="ECO:0007669"/>
    <property type="project" value="TreeGrafter"/>
</dbReference>
<dbReference type="GO" id="GO:0003723">
    <property type="term" value="F:RNA binding"/>
    <property type="evidence" value="ECO:0007669"/>
    <property type="project" value="UniProtKB-UniRule"/>
</dbReference>
<dbReference type="GO" id="GO:0006353">
    <property type="term" value="P:DNA-templated transcription termination"/>
    <property type="evidence" value="ECO:0007669"/>
    <property type="project" value="UniProtKB-UniRule"/>
</dbReference>
<dbReference type="GO" id="GO:0031564">
    <property type="term" value="P:transcription antitermination"/>
    <property type="evidence" value="ECO:0007669"/>
    <property type="project" value="UniProtKB-KW"/>
</dbReference>
<dbReference type="Gene3D" id="1.10.940.10">
    <property type="entry name" value="NusB-like"/>
    <property type="match status" value="1"/>
</dbReference>
<dbReference type="HAMAP" id="MF_00073">
    <property type="entry name" value="NusB"/>
    <property type="match status" value="1"/>
</dbReference>
<dbReference type="InterPro" id="IPR035926">
    <property type="entry name" value="NusB-like_sf"/>
</dbReference>
<dbReference type="InterPro" id="IPR011605">
    <property type="entry name" value="NusB_fam"/>
</dbReference>
<dbReference type="InterPro" id="IPR006027">
    <property type="entry name" value="NusB_RsmB_TIM44"/>
</dbReference>
<dbReference type="NCBIfam" id="TIGR01951">
    <property type="entry name" value="nusB"/>
    <property type="match status" value="1"/>
</dbReference>
<dbReference type="PANTHER" id="PTHR11078:SF3">
    <property type="entry name" value="ANTITERMINATION NUSB DOMAIN-CONTAINING PROTEIN"/>
    <property type="match status" value="1"/>
</dbReference>
<dbReference type="PANTHER" id="PTHR11078">
    <property type="entry name" value="N UTILIZATION SUBSTANCE PROTEIN B-RELATED"/>
    <property type="match status" value="1"/>
</dbReference>
<dbReference type="Pfam" id="PF01029">
    <property type="entry name" value="NusB"/>
    <property type="match status" value="1"/>
</dbReference>
<dbReference type="SUPFAM" id="SSF48013">
    <property type="entry name" value="NusB-like"/>
    <property type="match status" value="1"/>
</dbReference>